<accession>Q295N5</accession>
<feature type="chain" id="PRO_0000327903" description="Protein KRTCAP2 homolog">
    <location>
        <begin position="1"/>
        <end position="140"/>
    </location>
</feature>
<feature type="transmembrane region" description="Helical" evidence="3">
    <location>
        <begin position="11"/>
        <end position="31"/>
    </location>
</feature>
<feature type="transmembrane region" description="Helical" evidence="3">
    <location>
        <begin position="40"/>
        <end position="60"/>
    </location>
</feature>
<feature type="transmembrane region" description="Helical" evidence="3">
    <location>
        <begin position="74"/>
        <end position="94"/>
    </location>
</feature>
<feature type="transmembrane region" description="Helical" evidence="3">
    <location>
        <begin position="98"/>
        <end position="118"/>
    </location>
</feature>
<comment type="function">
    <text evidence="2">Subunit of the oligosaccharyl transferase (OST) complex that catalyzes the initial transfer of a defined glycan (Glc(3)Man(9)GlcNAc(2) in eukaryotes) from the lipid carrier dolichol-pyrophosphate to an asparagine residue within an Asn-X-Ser/Thr consensus motif in nascent polypeptide chains, the first step in protein N-glycosylation. N-glycosylation occurs cotranslationally and the complex associates with the Sec61 complex at the channel-forming translocon complex that mediates protein translocation across the endoplasmic reticulum (ER). All subunits are required for a maximal enzyme activity.</text>
</comment>
<comment type="subunit">
    <text evidence="1">Component of the oligosaccharyltransferase (OST) complex.</text>
</comment>
<comment type="subcellular location">
    <subcellularLocation>
        <location evidence="4">Membrane</location>
        <topology evidence="4">Multi-pass membrane protein</topology>
    </subcellularLocation>
</comment>
<comment type="similarity">
    <text evidence="4">Belongs to the KRTCAP2 family.</text>
</comment>
<reference key="1">
    <citation type="journal article" date="2005" name="Genome Res.">
        <title>Comparative genome sequencing of Drosophila pseudoobscura: chromosomal, gene, and cis-element evolution.</title>
        <authorList>
            <person name="Richards S."/>
            <person name="Liu Y."/>
            <person name="Bettencourt B.R."/>
            <person name="Hradecky P."/>
            <person name="Letovsky S."/>
            <person name="Nielsen R."/>
            <person name="Thornton K."/>
            <person name="Hubisz M.J."/>
            <person name="Chen R."/>
            <person name="Meisel R.P."/>
            <person name="Couronne O."/>
            <person name="Hua S."/>
            <person name="Smith M.A."/>
            <person name="Zhang P."/>
            <person name="Liu J."/>
            <person name="Bussemaker H.J."/>
            <person name="van Batenburg M.F."/>
            <person name="Howells S.L."/>
            <person name="Scherer S.E."/>
            <person name="Sodergren E."/>
            <person name="Matthews B.B."/>
            <person name="Crosby M.A."/>
            <person name="Schroeder A.J."/>
            <person name="Ortiz-Barrientos D."/>
            <person name="Rives C.M."/>
            <person name="Metzker M.L."/>
            <person name="Muzny D.M."/>
            <person name="Scott G."/>
            <person name="Steffen D."/>
            <person name="Wheeler D.A."/>
            <person name="Worley K.C."/>
            <person name="Havlak P."/>
            <person name="Durbin K.J."/>
            <person name="Egan A."/>
            <person name="Gill R."/>
            <person name="Hume J."/>
            <person name="Morgan M.B."/>
            <person name="Miner G."/>
            <person name="Hamilton C."/>
            <person name="Huang Y."/>
            <person name="Waldron L."/>
            <person name="Verduzco D."/>
            <person name="Clerc-Blankenburg K.P."/>
            <person name="Dubchak I."/>
            <person name="Noor M.A.F."/>
            <person name="Anderson W."/>
            <person name="White K.P."/>
            <person name="Clark A.G."/>
            <person name="Schaeffer S.W."/>
            <person name="Gelbart W.M."/>
            <person name="Weinstock G.M."/>
            <person name="Gibbs R.A."/>
        </authorList>
    </citation>
    <scope>NUCLEOTIDE SEQUENCE [LARGE SCALE GENOMIC DNA]</scope>
    <source>
        <strain>MV2-25 / Tucson 14011-0121.94</strain>
    </source>
</reference>
<name>KTAP2_DROPS</name>
<evidence type="ECO:0000250" key="1">
    <source>
        <dbReference type="UniProtKB" id="P86229"/>
    </source>
</evidence>
<evidence type="ECO:0000250" key="2">
    <source>
        <dbReference type="UniProtKB" id="Q8N6L1"/>
    </source>
</evidence>
<evidence type="ECO:0000255" key="3"/>
<evidence type="ECO:0000305" key="4"/>
<gene>
    <name type="ORF">GA16263</name>
</gene>
<dbReference type="EMBL" id="CM000070">
    <property type="protein sequence ID" value="EAL28673.2"/>
    <property type="molecule type" value="Genomic_DNA"/>
</dbReference>
<dbReference type="FunCoup" id="Q295N5">
    <property type="interactions" value="615"/>
</dbReference>
<dbReference type="STRING" id="46245.Q295N5"/>
<dbReference type="EnsemblMetazoa" id="FBtr0286115">
    <property type="protein sequence ID" value="FBpp0284553"/>
    <property type="gene ID" value="FBgn0076279"/>
</dbReference>
<dbReference type="KEGG" id="dpo:4802646"/>
<dbReference type="eggNOG" id="KOG4615">
    <property type="taxonomic scope" value="Eukaryota"/>
</dbReference>
<dbReference type="HOGENOM" id="CLU_109648_2_0_1"/>
<dbReference type="InParanoid" id="Q295N5"/>
<dbReference type="OMA" id="ITIYYMN"/>
<dbReference type="Proteomes" id="UP000001819">
    <property type="component" value="Chromosome 2"/>
</dbReference>
<dbReference type="Bgee" id="FBgn0076279">
    <property type="expression patterns" value="Expressed in female reproductive system and 2 other cell types or tissues"/>
</dbReference>
<dbReference type="GO" id="GO:0016020">
    <property type="term" value="C:membrane"/>
    <property type="evidence" value="ECO:0007669"/>
    <property type="project" value="UniProtKB-SubCell"/>
</dbReference>
<dbReference type="InterPro" id="IPR018614">
    <property type="entry name" value="KRTCAP2"/>
</dbReference>
<dbReference type="PANTHER" id="PTHR32001">
    <property type="entry name" value="KERATINOCYTE-ASSOCIATED PROTEIN 2"/>
    <property type="match status" value="1"/>
</dbReference>
<dbReference type="PANTHER" id="PTHR32001:SF1">
    <property type="entry name" value="KERATINOCYTE-ASSOCIATED PROTEIN 2"/>
    <property type="match status" value="1"/>
</dbReference>
<dbReference type="Pfam" id="PF09775">
    <property type="entry name" value="Keratin_assoc"/>
    <property type="match status" value="1"/>
</dbReference>
<proteinExistence type="inferred from homology"/>
<keyword id="KW-0472">Membrane</keyword>
<keyword id="KW-1185">Reference proteome</keyword>
<keyword id="KW-0812">Transmembrane</keyword>
<keyword id="KW-1133">Transmembrane helix</keyword>
<protein>
    <recommendedName>
        <fullName>Protein KRTCAP2 homolog</fullName>
    </recommendedName>
    <alternativeName>
        <fullName>Dolichyl-diphosphooligosaccharide--protein glycosyltransferase subunit KCP2</fullName>
        <shortName>Oligosaccharyl transferase subunit KCP2</shortName>
    </alternativeName>
</protein>
<organism>
    <name type="scientific">Drosophila pseudoobscura pseudoobscura</name>
    <name type="common">Fruit fly</name>
    <dbReference type="NCBI Taxonomy" id="46245"/>
    <lineage>
        <taxon>Eukaryota</taxon>
        <taxon>Metazoa</taxon>
        <taxon>Ecdysozoa</taxon>
        <taxon>Arthropoda</taxon>
        <taxon>Hexapoda</taxon>
        <taxon>Insecta</taxon>
        <taxon>Pterygota</taxon>
        <taxon>Neoptera</taxon>
        <taxon>Endopterygota</taxon>
        <taxon>Diptera</taxon>
        <taxon>Brachycera</taxon>
        <taxon>Muscomorpha</taxon>
        <taxon>Ephydroidea</taxon>
        <taxon>Drosophilidae</taxon>
        <taxon>Drosophila</taxon>
        <taxon>Sophophora</taxon>
    </lineage>
</organism>
<sequence>MSVSTSSKNTLLSSIISGILSLVIFATLRFCADWFNGSQLNVLVGGYLFSWLFILSLTCVSNAEMLIFGPDFQAKLVPEILFCLSLTVAAAGIVHRVCATTSVLFSLVGLYFLNRISIKYYSTSVVPVDAPARKTAKKFK</sequence>